<name>UBA5_ARATH</name>
<gene>
    <name type="ordered locus">At1g05350</name>
    <name type="ORF">YUP8H12.3</name>
</gene>
<reference key="1">
    <citation type="journal article" date="2000" name="Nature">
        <title>Sequence and analysis of chromosome 1 of the plant Arabidopsis thaliana.</title>
        <authorList>
            <person name="Theologis A."/>
            <person name="Ecker J.R."/>
            <person name="Palm C.J."/>
            <person name="Federspiel N.A."/>
            <person name="Kaul S."/>
            <person name="White O."/>
            <person name="Alonso J."/>
            <person name="Altafi H."/>
            <person name="Araujo R."/>
            <person name="Bowman C.L."/>
            <person name="Brooks S.Y."/>
            <person name="Buehler E."/>
            <person name="Chan A."/>
            <person name="Chao Q."/>
            <person name="Chen H."/>
            <person name="Cheuk R.F."/>
            <person name="Chin C.W."/>
            <person name="Chung M.K."/>
            <person name="Conn L."/>
            <person name="Conway A.B."/>
            <person name="Conway A.R."/>
            <person name="Creasy T.H."/>
            <person name="Dewar K."/>
            <person name="Dunn P."/>
            <person name="Etgu P."/>
            <person name="Feldblyum T.V."/>
            <person name="Feng J.-D."/>
            <person name="Fong B."/>
            <person name="Fujii C.Y."/>
            <person name="Gill J.E."/>
            <person name="Goldsmith A.D."/>
            <person name="Haas B."/>
            <person name="Hansen N.F."/>
            <person name="Hughes B."/>
            <person name="Huizar L."/>
            <person name="Hunter J.L."/>
            <person name="Jenkins J."/>
            <person name="Johnson-Hopson C."/>
            <person name="Khan S."/>
            <person name="Khaykin E."/>
            <person name="Kim C.J."/>
            <person name="Koo H.L."/>
            <person name="Kremenetskaia I."/>
            <person name="Kurtz D.B."/>
            <person name="Kwan A."/>
            <person name="Lam B."/>
            <person name="Langin-Hooper S."/>
            <person name="Lee A."/>
            <person name="Lee J.M."/>
            <person name="Lenz C.A."/>
            <person name="Li J.H."/>
            <person name="Li Y.-P."/>
            <person name="Lin X."/>
            <person name="Liu S.X."/>
            <person name="Liu Z.A."/>
            <person name="Luros J.S."/>
            <person name="Maiti R."/>
            <person name="Marziali A."/>
            <person name="Militscher J."/>
            <person name="Miranda M."/>
            <person name="Nguyen M."/>
            <person name="Nierman W.C."/>
            <person name="Osborne B.I."/>
            <person name="Pai G."/>
            <person name="Peterson J."/>
            <person name="Pham P.K."/>
            <person name="Rizzo M."/>
            <person name="Rooney T."/>
            <person name="Rowley D."/>
            <person name="Sakano H."/>
            <person name="Salzberg S.L."/>
            <person name="Schwartz J.R."/>
            <person name="Shinn P."/>
            <person name="Southwick A.M."/>
            <person name="Sun H."/>
            <person name="Tallon L.J."/>
            <person name="Tambunga G."/>
            <person name="Toriumi M.J."/>
            <person name="Town C.D."/>
            <person name="Utterback T."/>
            <person name="Van Aken S."/>
            <person name="Vaysberg M."/>
            <person name="Vysotskaia V.S."/>
            <person name="Walker M."/>
            <person name="Wu D."/>
            <person name="Yu G."/>
            <person name="Fraser C.M."/>
            <person name="Venter J.C."/>
            <person name="Davis R.W."/>
        </authorList>
    </citation>
    <scope>NUCLEOTIDE SEQUENCE [LARGE SCALE GENOMIC DNA]</scope>
    <source>
        <strain>cv. Columbia</strain>
    </source>
</reference>
<reference key="2">
    <citation type="journal article" date="2017" name="Plant J.">
        <title>Araport11: a complete reannotation of the Arabidopsis thaliana reference genome.</title>
        <authorList>
            <person name="Cheng C.Y."/>
            <person name="Krishnakumar V."/>
            <person name="Chan A.P."/>
            <person name="Thibaud-Nissen F."/>
            <person name="Schobel S."/>
            <person name="Town C.D."/>
        </authorList>
    </citation>
    <scope>GENOME REANNOTATION</scope>
    <source>
        <strain>cv. Columbia</strain>
    </source>
</reference>
<sequence length="431" mass="47020">MEVGFKALLDDLDVLEKSLSDPALINKLRSHVENLATLSKCNPHRRSKVKELSSEVVDSNPYSRLMALQRMGIVDNYERIREFSVAIVGIGGVGSVAAEMLTRCGIGRLLLYDYDTVELANMNRLFFRPDQVGMTKTDAAVQTLAEINPDVVLESFTMNITTVQGFETFTSSLTNKSFCPSKEGGSGVDLVLSCVDNYEARMAVNQACNELRQTWMESGVSEDAVSGHIQLLVPGETACFACAPPLVVASGIDERTLKREGVCAASLPTTMGVVAGLLVQNSLKFLLNFGEVSPYLGYNSLKDFFPTMKMRPNPQCSNVACLERQKEYMLAKPERDAAAKAKMEADASTTIDEGPLHDDNEWNISVVDDENEKDTTKAASSSDTLPEGLTRELPVADEYEKAIAIASGSGETEEEDDLEDLKKQLEALNAA</sequence>
<keyword id="KW-0067">ATP-binding</keyword>
<keyword id="KW-0479">Metal-binding</keyword>
<keyword id="KW-0547">Nucleotide-binding</keyword>
<keyword id="KW-1185">Reference proteome</keyword>
<keyword id="KW-0833">Ubl conjugation pathway</keyword>
<keyword id="KW-0862">Zinc</keyword>
<accession>O23034</accession>
<organism>
    <name type="scientific">Arabidopsis thaliana</name>
    <name type="common">Mouse-ear cress</name>
    <dbReference type="NCBI Taxonomy" id="3702"/>
    <lineage>
        <taxon>Eukaryota</taxon>
        <taxon>Viridiplantae</taxon>
        <taxon>Streptophyta</taxon>
        <taxon>Embryophyta</taxon>
        <taxon>Tracheophyta</taxon>
        <taxon>Spermatophyta</taxon>
        <taxon>Magnoliopsida</taxon>
        <taxon>eudicotyledons</taxon>
        <taxon>Gunneridae</taxon>
        <taxon>Pentapetalae</taxon>
        <taxon>rosids</taxon>
        <taxon>malvids</taxon>
        <taxon>Brassicales</taxon>
        <taxon>Brassicaceae</taxon>
        <taxon>Camelineae</taxon>
        <taxon>Arabidopsis</taxon>
    </lineage>
</organism>
<dbReference type="EMBL" id="AC000098">
    <property type="protein sequence ID" value="AAB71466.1"/>
    <property type="status" value="ALT_SEQ"/>
    <property type="molecule type" value="Genomic_DNA"/>
</dbReference>
<dbReference type="EMBL" id="CP002684">
    <property type="protein sequence ID" value="AEE27828.1"/>
    <property type="molecule type" value="Genomic_DNA"/>
</dbReference>
<dbReference type="PIR" id="D86188">
    <property type="entry name" value="D86188"/>
</dbReference>
<dbReference type="RefSeq" id="NP_172027.2">
    <property type="nucleotide sequence ID" value="NM_100414.4"/>
</dbReference>
<dbReference type="SMR" id="O23034"/>
<dbReference type="FunCoup" id="O23034">
    <property type="interactions" value="4680"/>
</dbReference>
<dbReference type="IntAct" id="O23034">
    <property type="interactions" value="1"/>
</dbReference>
<dbReference type="STRING" id="3702.O23034"/>
<dbReference type="iPTMnet" id="O23034"/>
<dbReference type="PaxDb" id="3702-AT1G05350.1"/>
<dbReference type="ProteomicsDB" id="228684"/>
<dbReference type="EnsemblPlants" id="AT1G05350.1">
    <property type="protein sequence ID" value="AT1G05350.1"/>
    <property type="gene ID" value="AT1G05350"/>
</dbReference>
<dbReference type="GeneID" id="837034"/>
<dbReference type="Gramene" id="AT1G05350.1">
    <property type="protein sequence ID" value="AT1G05350.1"/>
    <property type="gene ID" value="AT1G05350"/>
</dbReference>
<dbReference type="KEGG" id="ath:AT1G05350"/>
<dbReference type="Araport" id="AT1G05350"/>
<dbReference type="TAIR" id="AT1G05350"/>
<dbReference type="eggNOG" id="KOG2336">
    <property type="taxonomic scope" value="Eukaryota"/>
</dbReference>
<dbReference type="HOGENOM" id="CLU_013325_0_1_1"/>
<dbReference type="InParanoid" id="O23034"/>
<dbReference type="OMA" id="MNIVKDY"/>
<dbReference type="PhylomeDB" id="O23034"/>
<dbReference type="PRO" id="PR:O23034"/>
<dbReference type="Proteomes" id="UP000006548">
    <property type="component" value="Chromosome 1"/>
</dbReference>
<dbReference type="ExpressionAtlas" id="O23034">
    <property type="expression patterns" value="baseline and differential"/>
</dbReference>
<dbReference type="GO" id="GO:0005524">
    <property type="term" value="F:ATP binding"/>
    <property type="evidence" value="ECO:0007669"/>
    <property type="project" value="UniProtKB-KW"/>
</dbReference>
<dbReference type="GO" id="GO:0046872">
    <property type="term" value="F:metal ion binding"/>
    <property type="evidence" value="ECO:0007669"/>
    <property type="project" value="UniProtKB-KW"/>
</dbReference>
<dbReference type="GO" id="GO:0008641">
    <property type="term" value="F:ubiquitin-like modifier activating enzyme activity"/>
    <property type="evidence" value="ECO:0007669"/>
    <property type="project" value="InterPro"/>
</dbReference>
<dbReference type="CDD" id="cd00757">
    <property type="entry name" value="ThiF_MoeB_HesA_family"/>
    <property type="match status" value="1"/>
</dbReference>
<dbReference type="FunFam" id="3.40.50.720:FF:000066">
    <property type="entry name" value="Putative ubiquitin-like modifier-activating enzyme 5"/>
    <property type="match status" value="1"/>
</dbReference>
<dbReference type="Gene3D" id="3.40.50.720">
    <property type="entry name" value="NAD(P)-binding Rossmann-like Domain"/>
    <property type="match status" value="1"/>
</dbReference>
<dbReference type="InterPro" id="IPR029752">
    <property type="entry name" value="D-isomer_DH_CS1"/>
</dbReference>
<dbReference type="InterPro" id="IPR045886">
    <property type="entry name" value="ThiF/MoeB/HesA"/>
</dbReference>
<dbReference type="InterPro" id="IPR000594">
    <property type="entry name" value="ThiF_NAD_FAD-bd"/>
</dbReference>
<dbReference type="InterPro" id="IPR035985">
    <property type="entry name" value="Ubiquitin-activating_enz"/>
</dbReference>
<dbReference type="PANTHER" id="PTHR10953">
    <property type="entry name" value="UBIQUITIN-ACTIVATING ENZYME E1"/>
    <property type="match status" value="1"/>
</dbReference>
<dbReference type="PANTHER" id="PTHR10953:SF9">
    <property type="entry name" value="UBIQUITIN-LIKE MODIFIER-ACTIVATING ENZYME 5"/>
    <property type="match status" value="1"/>
</dbReference>
<dbReference type="Pfam" id="PF00899">
    <property type="entry name" value="ThiF"/>
    <property type="match status" value="1"/>
</dbReference>
<dbReference type="SUPFAM" id="SSF69572">
    <property type="entry name" value="Activating enzymes of the ubiquitin-like proteins"/>
    <property type="match status" value="1"/>
</dbReference>
<feature type="chain" id="PRO_0000391953" description="Ubiquitin-like modifier-activating enzyme 5">
    <location>
        <begin position="1"/>
        <end position="431"/>
    </location>
</feature>
<feature type="region of interest" description="Disordered" evidence="2">
    <location>
        <begin position="339"/>
        <end position="396"/>
    </location>
</feature>
<feature type="active site" description="Glycyl thioester intermediate" evidence="1">
    <location>
        <position position="263"/>
    </location>
</feature>
<feature type="binding site" evidence="1">
    <location>
        <position position="92"/>
    </location>
    <ligand>
        <name>ATP</name>
        <dbReference type="ChEBI" id="CHEBI:30616"/>
    </ligand>
</feature>
<feature type="binding site" evidence="1">
    <location>
        <position position="113"/>
    </location>
    <ligand>
        <name>ATP</name>
        <dbReference type="ChEBI" id="CHEBI:30616"/>
    </ligand>
</feature>
<feature type="binding site" evidence="1">
    <location>
        <position position="136"/>
    </location>
    <ligand>
        <name>ATP</name>
        <dbReference type="ChEBI" id="CHEBI:30616"/>
    </ligand>
</feature>
<feature type="binding site" evidence="1">
    <location>
        <position position="159"/>
    </location>
    <ligand>
        <name>ATP</name>
        <dbReference type="ChEBI" id="CHEBI:30616"/>
    </ligand>
</feature>
<feature type="binding site" evidence="1">
    <location>
        <position position="197"/>
    </location>
    <ligand>
        <name>ATP</name>
        <dbReference type="ChEBI" id="CHEBI:30616"/>
    </ligand>
</feature>
<feature type="binding site" evidence="1">
    <location>
        <position position="239"/>
    </location>
    <ligand>
        <name>Zn(2+)</name>
        <dbReference type="ChEBI" id="CHEBI:29105"/>
    </ligand>
</feature>
<feature type="binding site" evidence="1">
    <location>
        <position position="242"/>
    </location>
    <ligand>
        <name>Zn(2+)</name>
        <dbReference type="ChEBI" id="CHEBI:29105"/>
    </ligand>
</feature>
<feature type="binding site" evidence="1">
    <location>
        <position position="316"/>
    </location>
    <ligand>
        <name>Zn(2+)</name>
        <dbReference type="ChEBI" id="CHEBI:29105"/>
    </ligand>
</feature>
<feature type="binding site" evidence="1">
    <location>
        <position position="321"/>
    </location>
    <ligand>
        <name>Zn(2+)</name>
        <dbReference type="ChEBI" id="CHEBI:29105"/>
    </ligand>
</feature>
<comment type="function">
    <text evidence="1">E1-like enzyme which activates UFM1.</text>
</comment>
<comment type="similarity">
    <text evidence="3">Belongs to the ubiquitin-activating E1 family. UBA5 subfamily.</text>
</comment>
<comment type="sequence caution" evidence="3">
    <conflict type="erroneous gene model prediction">
        <sequence resource="EMBL-CDS" id="AAB71466"/>
    </conflict>
</comment>
<proteinExistence type="inferred from homology"/>
<protein>
    <recommendedName>
        <fullName>Ubiquitin-like modifier-activating enzyme 5</fullName>
        <shortName>Ubiquitin-activating enzyme 5</shortName>
    </recommendedName>
</protein>
<evidence type="ECO:0000250" key="1"/>
<evidence type="ECO:0000256" key="2">
    <source>
        <dbReference type="SAM" id="MobiDB-lite"/>
    </source>
</evidence>
<evidence type="ECO:0000305" key="3"/>